<evidence type="ECO:0000255" key="1">
    <source>
        <dbReference type="HAMAP-Rule" id="MF_00692"/>
    </source>
</evidence>
<dbReference type="EC" id="2.7.7.-" evidence="1"/>
<dbReference type="EC" id="2.7.7.108" evidence="1"/>
<dbReference type="EMBL" id="CP000393">
    <property type="protein sequence ID" value="ABG50765.1"/>
    <property type="molecule type" value="Genomic_DNA"/>
</dbReference>
<dbReference type="RefSeq" id="WP_011611142.1">
    <property type="nucleotide sequence ID" value="NC_008312.1"/>
</dbReference>
<dbReference type="SMR" id="Q115Q9"/>
<dbReference type="KEGG" id="ter:Tery_1476"/>
<dbReference type="eggNOG" id="COG0397">
    <property type="taxonomic scope" value="Bacteria"/>
</dbReference>
<dbReference type="HOGENOM" id="CLU_010245_0_0_3"/>
<dbReference type="OrthoDB" id="9773505at2"/>
<dbReference type="GO" id="GO:0070733">
    <property type="term" value="F:AMPylase activity"/>
    <property type="evidence" value="ECO:0007669"/>
    <property type="project" value="RHEA"/>
</dbReference>
<dbReference type="GO" id="GO:0005524">
    <property type="term" value="F:ATP binding"/>
    <property type="evidence" value="ECO:0007669"/>
    <property type="project" value="UniProtKB-UniRule"/>
</dbReference>
<dbReference type="GO" id="GO:0000287">
    <property type="term" value="F:magnesium ion binding"/>
    <property type="evidence" value="ECO:0007669"/>
    <property type="project" value="UniProtKB-UniRule"/>
</dbReference>
<dbReference type="HAMAP" id="MF_00692">
    <property type="entry name" value="YdiU_SelO"/>
    <property type="match status" value="1"/>
</dbReference>
<dbReference type="InterPro" id="IPR003846">
    <property type="entry name" value="SelO"/>
</dbReference>
<dbReference type="NCBIfam" id="NF000658">
    <property type="entry name" value="PRK00029.1"/>
    <property type="match status" value="1"/>
</dbReference>
<dbReference type="PANTHER" id="PTHR32057">
    <property type="entry name" value="PROTEIN ADENYLYLTRANSFERASE SELO, MITOCHONDRIAL"/>
    <property type="match status" value="1"/>
</dbReference>
<dbReference type="PANTHER" id="PTHR32057:SF14">
    <property type="entry name" value="PROTEIN ADENYLYLTRANSFERASE SELO, MITOCHONDRIAL"/>
    <property type="match status" value="1"/>
</dbReference>
<dbReference type="Pfam" id="PF02696">
    <property type="entry name" value="SelO"/>
    <property type="match status" value="1"/>
</dbReference>
<comment type="function">
    <text evidence="1">Nucleotidyltransferase involved in the post-translational modification of proteins. It can catalyze the addition of adenosine monophosphate (AMP) or uridine monophosphate (UMP) to a protein, resulting in modifications known as AMPylation and UMPylation.</text>
</comment>
<comment type="catalytic activity">
    <reaction evidence="1">
        <text>L-seryl-[protein] + ATP = 3-O-(5'-adenylyl)-L-seryl-[protein] + diphosphate</text>
        <dbReference type="Rhea" id="RHEA:58120"/>
        <dbReference type="Rhea" id="RHEA-COMP:9863"/>
        <dbReference type="Rhea" id="RHEA-COMP:15073"/>
        <dbReference type="ChEBI" id="CHEBI:29999"/>
        <dbReference type="ChEBI" id="CHEBI:30616"/>
        <dbReference type="ChEBI" id="CHEBI:33019"/>
        <dbReference type="ChEBI" id="CHEBI:142516"/>
        <dbReference type="EC" id="2.7.7.108"/>
    </reaction>
</comment>
<comment type="catalytic activity">
    <reaction evidence="1">
        <text>L-threonyl-[protein] + ATP = 3-O-(5'-adenylyl)-L-threonyl-[protein] + diphosphate</text>
        <dbReference type="Rhea" id="RHEA:54292"/>
        <dbReference type="Rhea" id="RHEA-COMP:11060"/>
        <dbReference type="Rhea" id="RHEA-COMP:13847"/>
        <dbReference type="ChEBI" id="CHEBI:30013"/>
        <dbReference type="ChEBI" id="CHEBI:30616"/>
        <dbReference type="ChEBI" id="CHEBI:33019"/>
        <dbReference type="ChEBI" id="CHEBI:138113"/>
        <dbReference type="EC" id="2.7.7.108"/>
    </reaction>
</comment>
<comment type="catalytic activity">
    <reaction evidence="1">
        <text>L-tyrosyl-[protein] + ATP = O-(5'-adenylyl)-L-tyrosyl-[protein] + diphosphate</text>
        <dbReference type="Rhea" id="RHEA:54288"/>
        <dbReference type="Rhea" id="RHEA-COMP:10136"/>
        <dbReference type="Rhea" id="RHEA-COMP:13846"/>
        <dbReference type="ChEBI" id="CHEBI:30616"/>
        <dbReference type="ChEBI" id="CHEBI:33019"/>
        <dbReference type="ChEBI" id="CHEBI:46858"/>
        <dbReference type="ChEBI" id="CHEBI:83624"/>
        <dbReference type="EC" id="2.7.7.108"/>
    </reaction>
</comment>
<comment type="catalytic activity">
    <reaction evidence="1">
        <text>L-histidyl-[protein] + UTP = N(tele)-(5'-uridylyl)-L-histidyl-[protein] + diphosphate</text>
        <dbReference type="Rhea" id="RHEA:83891"/>
        <dbReference type="Rhea" id="RHEA-COMP:9745"/>
        <dbReference type="Rhea" id="RHEA-COMP:20239"/>
        <dbReference type="ChEBI" id="CHEBI:29979"/>
        <dbReference type="ChEBI" id="CHEBI:33019"/>
        <dbReference type="ChEBI" id="CHEBI:46398"/>
        <dbReference type="ChEBI" id="CHEBI:233474"/>
    </reaction>
</comment>
<comment type="catalytic activity">
    <reaction evidence="1">
        <text>L-seryl-[protein] + UTP = O-(5'-uridylyl)-L-seryl-[protein] + diphosphate</text>
        <dbReference type="Rhea" id="RHEA:64604"/>
        <dbReference type="Rhea" id="RHEA-COMP:9863"/>
        <dbReference type="Rhea" id="RHEA-COMP:16635"/>
        <dbReference type="ChEBI" id="CHEBI:29999"/>
        <dbReference type="ChEBI" id="CHEBI:33019"/>
        <dbReference type="ChEBI" id="CHEBI:46398"/>
        <dbReference type="ChEBI" id="CHEBI:156051"/>
    </reaction>
</comment>
<comment type="catalytic activity">
    <reaction evidence="1">
        <text>L-tyrosyl-[protein] + UTP = O-(5'-uridylyl)-L-tyrosyl-[protein] + diphosphate</text>
        <dbReference type="Rhea" id="RHEA:83887"/>
        <dbReference type="Rhea" id="RHEA-COMP:10136"/>
        <dbReference type="Rhea" id="RHEA-COMP:20238"/>
        <dbReference type="ChEBI" id="CHEBI:33019"/>
        <dbReference type="ChEBI" id="CHEBI:46398"/>
        <dbReference type="ChEBI" id="CHEBI:46858"/>
        <dbReference type="ChEBI" id="CHEBI:90602"/>
    </reaction>
</comment>
<comment type="cofactor">
    <cofactor evidence="1">
        <name>Mg(2+)</name>
        <dbReference type="ChEBI" id="CHEBI:18420"/>
    </cofactor>
    <cofactor evidence="1">
        <name>Mn(2+)</name>
        <dbReference type="ChEBI" id="CHEBI:29035"/>
    </cofactor>
</comment>
<comment type="similarity">
    <text evidence="1">Belongs to the SELO family.</text>
</comment>
<gene>
    <name evidence="1" type="primary">ydiU</name>
    <name evidence="1" type="synonym">selO</name>
    <name type="ordered locus">Tery_1476</name>
</gene>
<name>SELO_TRIEI</name>
<keyword id="KW-0067">ATP-binding</keyword>
<keyword id="KW-0460">Magnesium</keyword>
<keyword id="KW-0464">Manganese</keyword>
<keyword id="KW-0479">Metal-binding</keyword>
<keyword id="KW-0547">Nucleotide-binding</keyword>
<keyword id="KW-0548">Nucleotidyltransferase</keyword>
<keyword id="KW-0808">Transferase</keyword>
<reference key="1">
    <citation type="journal article" date="2015" name="Proc. Natl. Acad. Sci. U.S.A.">
        <title>Trichodesmium genome maintains abundant, widespread noncoding DNA in situ, despite oligotrophic lifestyle.</title>
        <authorList>
            <person name="Walworth N."/>
            <person name="Pfreundt U."/>
            <person name="Nelson W.C."/>
            <person name="Mincer T."/>
            <person name="Heidelberg J.F."/>
            <person name="Fu F."/>
            <person name="Waterbury J.B."/>
            <person name="Glavina del Rio T."/>
            <person name="Goodwin L."/>
            <person name="Kyrpides N.C."/>
            <person name="Land M.L."/>
            <person name="Woyke T."/>
            <person name="Hutchins D.A."/>
            <person name="Hess W.R."/>
            <person name="Webb E.A."/>
        </authorList>
    </citation>
    <scope>NUCLEOTIDE SEQUENCE [LARGE SCALE GENOMIC DNA]</scope>
    <source>
        <strain>IMS101</strain>
    </source>
</reference>
<proteinExistence type="inferred from homology"/>
<accession>Q115Q9</accession>
<feature type="chain" id="PRO_0000271877" description="Protein nucleotidyltransferase YdiU">
    <location>
        <begin position="1"/>
        <end position="474"/>
    </location>
</feature>
<feature type="active site" description="Proton acceptor" evidence="1">
    <location>
        <position position="262"/>
    </location>
</feature>
<feature type="binding site" evidence="1">
    <location>
        <position position="89"/>
    </location>
    <ligand>
        <name>ATP</name>
        <dbReference type="ChEBI" id="CHEBI:30616"/>
    </ligand>
</feature>
<feature type="binding site" evidence="1">
    <location>
        <position position="91"/>
    </location>
    <ligand>
        <name>ATP</name>
        <dbReference type="ChEBI" id="CHEBI:30616"/>
    </ligand>
</feature>
<feature type="binding site" evidence="1">
    <location>
        <position position="92"/>
    </location>
    <ligand>
        <name>ATP</name>
        <dbReference type="ChEBI" id="CHEBI:30616"/>
    </ligand>
</feature>
<feature type="binding site" evidence="1">
    <location>
        <position position="112"/>
    </location>
    <ligand>
        <name>ATP</name>
        <dbReference type="ChEBI" id="CHEBI:30616"/>
    </ligand>
</feature>
<feature type="binding site" evidence="1">
    <location>
        <position position="124"/>
    </location>
    <ligand>
        <name>ATP</name>
        <dbReference type="ChEBI" id="CHEBI:30616"/>
    </ligand>
</feature>
<feature type="binding site" evidence="1">
    <location>
        <position position="125"/>
    </location>
    <ligand>
        <name>ATP</name>
        <dbReference type="ChEBI" id="CHEBI:30616"/>
    </ligand>
</feature>
<feature type="binding site" evidence="1">
    <location>
        <position position="178"/>
    </location>
    <ligand>
        <name>ATP</name>
        <dbReference type="ChEBI" id="CHEBI:30616"/>
    </ligand>
</feature>
<feature type="binding site" evidence="1">
    <location>
        <position position="185"/>
    </location>
    <ligand>
        <name>ATP</name>
        <dbReference type="ChEBI" id="CHEBI:30616"/>
    </ligand>
</feature>
<feature type="binding site" evidence="1">
    <location>
        <position position="263"/>
    </location>
    <ligand>
        <name>Mg(2+)</name>
        <dbReference type="ChEBI" id="CHEBI:18420"/>
    </ligand>
</feature>
<feature type="binding site" evidence="1">
    <location>
        <position position="272"/>
    </location>
    <ligand>
        <name>ATP</name>
        <dbReference type="ChEBI" id="CHEBI:30616"/>
    </ligand>
</feature>
<feature type="binding site" evidence="1">
    <location>
        <position position="272"/>
    </location>
    <ligand>
        <name>Mg(2+)</name>
        <dbReference type="ChEBI" id="CHEBI:18420"/>
    </ligand>
</feature>
<organism>
    <name type="scientific">Trichodesmium erythraeum (strain IMS101)</name>
    <dbReference type="NCBI Taxonomy" id="203124"/>
    <lineage>
        <taxon>Bacteria</taxon>
        <taxon>Bacillati</taxon>
        <taxon>Cyanobacteriota</taxon>
        <taxon>Cyanophyceae</taxon>
        <taxon>Oscillatoriophycideae</taxon>
        <taxon>Oscillatoriales</taxon>
        <taxon>Microcoleaceae</taxon>
        <taxon>Trichodesmium</taxon>
    </lineage>
</organism>
<sequence>MSNPLLSLNYEPAIQALGGDYYDEVLSAEFPQHILRFRNDQLLPKIGLNSQDVKDEHFIEAFGKFHCVRPFLALRYHGYQFGEYNPYLGDGRGFLYGQVRGVDDELYDFGTKGSGRTPYSRSADGRLTLKGGVREVLAAEILHRHGVRTSRCLSLIETGEGLWRGDEPSPTRSSVMVRFSRSHIRFGTFERLHFYKRPDLTKKLLNHVINCYYSNLKKENISQKDPFQDCYFLFYLELVKRIAKLVAQWMAAGFCHGVLNTDNMSITGESFDYGPYSFIPTYNPKFTAAYFDYSGLYRYSHQPLVCKSNLQLLQEALAAVIDRKNMRSALEKFDDFYLHEYRQLMMRRLGFKKLAEADADKLLQLTIKMLTDSQVGYHDFFLELRQKFSPEWRDDISQIFADFEQPELIDPWRQYYYHLLQTYSDNELEEMTERLQQYNPQQSLIRPVIESVWEAITLEDNWQPFYDLLQQIYD</sequence>
<protein>
    <recommendedName>
        <fullName evidence="1">Protein nucleotidyltransferase YdiU</fullName>
        <ecNumber evidence="1">2.7.7.-</ecNumber>
    </recommendedName>
    <alternativeName>
        <fullName evidence="1">Protein adenylyltransferase YdiU</fullName>
        <ecNumber evidence="1">2.7.7.108</ecNumber>
    </alternativeName>
    <alternativeName>
        <fullName evidence="1">Protein uridylyltransferase YdiU</fullName>
        <ecNumber evidence="1">2.7.7.-</ecNumber>
    </alternativeName>
</protein>